<accession>O42422</accession>
<protein>
    <recommendedName>
        <fullName>Ephrin type-A receptor 7</fullName>
        <ecNumber>2.7.10.1</ecNumber>
    </recommendedName>
    <alternativeName>
        <fullName>EPH-like kinase 11</fullName>
        <shortName>EK11</shortName>
        <shortName>cEK11</shortName>
    </alternativeName>
    <alternativeName>
        <fullName>Tyrosine-protein kinase receptor CEPHA7</fullName>
    </alternativeName>
</protein>
<name>EPHA7_CHICK</name>
<sequence>MVLRSRLPPWIMLCSVWLLRFAHTGEAQAAKEVILLDSKAQQTELEWISSPPNGWEEISGLDENYTPIRTYQVCQVMESNQNNWLRTNWIAKSNAQRIFVELKFTLRDCNSLPGVLGTCKETFNLYYYETDYDTGRNIRENQYVKIDTIAADESFTQGDLGERKMKLNTEVREIGPLSKKGFYLAFQDVGACIALVSVKVYYKKCWSIIENLAIFPDTVTGSEFSSLVEVRGTCVSSAEEEAENSPKMHCSAEGEWLVPIGKCICKAGYQQKGDTCEPCGRGFYKSSSQDLQCSRCPTHSFSDKEGSSRCDCEDSYYRAPSDPPYVACTRPPSAPQNLIFNINQTTVSLEWSPPADNGGRNDVTYRILCKRCSWEQGECVPCGSNIGYMPQQTGLVDNYVTVMDLLAHANYTFEVEAVNGVSDLSRSQRLFAAVSITTGQAAPSQVSGVMKERVLQRSVELSWQEPEHPNGVITEYEIKYYEKDQRERTYSTVKTKSTSASINNLKPGTVYVFQIRAFTAAGYGNYSPRLDVATLEEATATAVSSEQNPVIIIAVVAVAGTIILVFMVFGFIIGRRHCGYSKADQEGDEELYFHFKFPGTKTYIDPETYEDPNRAVHQFAKELDASCIKIERVIGAGEFGEVCSGRLKLPGKRDVAVAIKTLKVGYTEKQRRDFLCEASIMGQFDHPNVVHLEGVVTRGKPVMIVIEYMENGALDAFLRKHDGQFTVIQLVGMLRGIAAGMRYLADMGYVHRDLAARNILVNSNLVCKVSDFGLSRVIEDDPEAVYTTTGGKIPVRWTAPEAIQYRKFTSASDVWSYGIVMWEVMSYGERPYWDMSNQDVIKAIEEGYRLPAPMDCPAGLHQLMLDCWQKERGERPKFEQIVGILDKMIRNPNSLKTPLGTCSRPISPLLDQNTPDFTTFCSVGEWLQAIKMERYKDNFTAAGYNSLESVARMTIEDVMSLGITLVGHQKKIMSSIQTMRAQMLHLHGTGIQV</sequence>
<comment type="function">
    <text evidence="1">Receptor tyrosine kinase which binds promiscuously GPI-anchored ephrin-A family ligands residing on adjacent cells, leading to contact-dependent bidirectional signaling into neighboring cells. The signaling pathway downstream of the receptor is referred to as forward signaling while the signaling pathway downstream of the ephrin ligand is referred to as reverse signaling. Among GPI-anchored ephrin-A ligands, EFNA5 is a cognate/functional ligand for EPHA7 and their interaction regulates brain development modulating cell-cell adhesion and repulsion. Has a repellent activity on axons and is for instance involved in the guidance of corticothalamic axons and in the proper topographic mapping of retinal axons to the colliculus. May also regulate brain development through a caspase(CASP3)-dependent proapoptotic activity. Forward signaling may result in activation of components of the ERK signaling pathway including MAP2K1, MAP2K2, MAPK1 and MAPK3 which are phosphorylated upon activation of EPHA7 (By similarity).</text>
</comment>
<comment type="catalytic activity">
    <reaction evidence="7">
        <text>L-tyrosyl-[protein] + ATP = O-phospho-L-tyrosyl-[protein] + ADP + H(+)</text>
        <dbReference type="Rhea" id="RHEA:10596"/>
        <dbReference type="Rhea" id="RHEA-COMP:10136"/>
        <dbReference type="Rhea" id="RHEA-COMP:20101"/>
        <dbReference type="ChEBI" id="CHEBI:15378"/>
        <dbReference type="ChEBI" id="CHEBI:30616"/>
        <dbReference type="ChEBI" id="CHEBI:46858"/>
        <dbReference type="ChEBI" id="CHEBI:61978"/>
        <dbReference type="ChEBI" id="CHEBI:456216"/>
        <dbReference type="EC" id="2.7.10.1"/>
    </reaction>
</comment>
<comment type="subunit">
    <text evidence="1">Heterotetramer upon binding of the ligand. The heterotetramer is composed of an ephrin dimer and a receptor dimer. Oligomerization is probably required to induce biological responses (By similarity).</text>
</comment>
<comment type="subcellular location">
    <subcellularLocation>
        <location evidence="1">Cell membrane</location>
        <topology evidence="1">Single-pass type I membrane protein</topology>
    </subcellularLocation>
</comment>
<comment type="developmental stage">
    <text evidence="8">Within the nervous system, expression is restricted to prosomeres 1 and 2 in the diencephalon and all the rhombomeres in the hindbrain during segmentation stages. Later on, a superimposed pattern appears that correlates with the formation of several axonal tracts. In the somitic mesoderm, the expression correlates with segmentation and the guidance of both neural crest and motor axons through the sclerotomes.</text>
</comment>
<comment type="PTM">
    <text evidence="1">Phosphorylated.</text>
</comment>
<comment type="similarity">
    <text evidence="3">Belongs to the protein kinase superfamily. Tyr protein kinase family. Ephrin receptor subfamily.</text>
</comment>
<dbReference type="EC" id="2.7.10.1"/>
<dbReference type="EMBL" id="Y14271">
    <property type="protein sequence ID" value="CAA74643.1"/>
    <property type="molecule type" value="mRNA"/>
</dbReference>
<dbReference type="RefSeq" id="NP_990414.1">
    <property type="nucleotide sequence ID" value="NM_205083.2"/>
</dbReference>
<dbReference type="SMR" id="O42422"/>
<dbReference type="FunCoup" id="O42422">
    <property type="interactions" value="194"/>
</dbReference>
<dbReference type="STRING" id="9031.ENSGALP00000025098"/>
<dbReference type="GlyCosmos" id="O42422">
    <property type="glycosylation" value="2 sites, No reported glycans"/>
</dbReference>
<dbReference type="GlyGen" id="O42422">
    <property type="glycosylation" value="2 sites"/>
</dbReference>
<dbReference type="PaxDb" id="9031-ENSGALP00000025098"/>
<dbReference type="GeneID" id="395967"/>
<dbReference type="KEGG" id="gga:395967"/>
<dbReference type="CTD" id="2045"/>
<dbReference type="VEuPathDB" id="HostDB:geneid_395967"/>
<dbReference type="eggNOG" id="KOG0196">
    <property type="taxonomic scope" value="Eukaryota"/>
</dbReference>
<dbReference type="HOGENOM" id="CLU_000288_141_0_1"/>
<dbReference type="InParanoid" id="O42422"/>
<dbReference type="OrthoDB" id="4062651at2759"/>
<dbReference type="PhylomeDB" id="O42422"/>
<dbReference type="TreeFam" id="TF315608"/>
<dbReference type="BRENDA" id="2.7.10.1">
    <property type="organism ID" value="1306"/>
</dbReference>
<dbReference type="Reactome" id="R-GGA-2682334">
    <property type="pathway name" value="EPH-Ephrin signaling"/>
</dbReference>
<dbReference type="Reactome" id="R-GGA-3928663">
    <property type="pathway name" value="EPHA-mediated growth cone collapse"/>
</dbReference>
<dbReference type="Reactome" id="R-GGA-3928665">
    <property type="pathway name" value="EPH-ephrin mediated repulsion of cells"/>
</dbReference>
<dbReference type="PRO" id="PR:O42422"/>
<dbReference type="Proteomes" id="UP000000539">
    <property type="component" value="Chromosome 3"/>
</dbReference>
<dbReference type="Bgee" id="ENSGALG00000015593">
    <property type="expression patterns" value="Expressed in brain and 6 other cell types or tissues"/>
</dbReference>
<dbReference type="GO" id="GO:0030425">
    <property type="term" value="C:dendrite"/>
    <property type="evidence" value="ECO:0000318"/>
    <property type="project" value="GO_Central"/>
</dbReference>
<dbReference type="GO" id="GO:0005886">
    <property type="term" value="C:plasma membrane"/>
    <property type="evidence" value="ECO:0000318"/>
    <property type="project" value="GO_Central"/>
</dbReference>
<dbReference type="GO" id="GO:0005524">
    <property type="term" value="F:ATP binding"/>
    <property type="evidence" value="ECO:0007669"/>
    <property type="project" value="UniProtKB-KW"/>
</dbReference>
<dbReference type="GO" id="GO:0008046">
    <property type="term" value="F:axon guidance receptor activity"/>
    <property type="evidence" value="ECO:0000250"/>
    <property type="project" value="UniProtKB"/>
</dbReference>
<dbReference type="GO" id="GO:0005004">
    <property type="term" value="F:GPI-linked ephrin receptor activity"/>
    <property type="evidence" value="ECO:0000250"/>
    <property type="project" value="UniProtKB"/>
</dbReference>
<dbReference type="GO" id="GO:0004713">
    <property type="term" value="F:protein tyrosine kinase activity"/>
    <property type="evidence" value="ECO:0000250"/>
    <property type="project" value="AgBase"/>
</dbReference>
<dbReference type="GO" id="GO:0005005">
    <property type="term" value="F:transmembrane-ephrin receptor activity"/>
    <property type="evidence" value="ECO:0000318"/>
    <property type="project" value="GO_Central"/>
</dbReference>
<dbReference type="GO" id="GO:0006915">
    <property type="term" value="P:apoptotic process"/>
    <property type="evidence" value="ECO:0007669"/>
    <property type="project" value="UniProtKB-KW"/>
</dbReference>
<dbReference type="GO" id="GO:0007411">
    <property type="term" value="P:axon guidance"/>
    <property type="evidence" value="ECO:0000318"/>
    <property type="project" value="GO_Central"/>
</dbReference>
<dbReference type="GO" id="GO:0007420">
    <property type="term" value="P:brain development"/>
    <property type="evidence" value="ECO:0000250"/>
    <property type="project" value="UniProtKB"/>
</dbReference>
<dbReference type="GO" id="GO:0048013">
    <property type="term" value="P:ephrin receptor signaling pathway"/>
    <property type="evidence" value="ECO:0000250"/>
    <property type="project" value="UniProtKB"/>
</dbReference>
<dbReference type="GO" id="GO:0016310">
    <property type="term" value="P:phosphorylation"/>
    <property type="evidence" value="ECO:0000250"/>
    <property type="project" value="AgBase"/>
</dbReference>
<dbReference type="GO" id="GO:0022407">
    <property type="term" value="P:regulation of cell-cell adhesion"/>
    <property type="evidence" value="ECO:0000250"/>
    <property type="project" value="UniProtKB"/>
</dbReference>
<dbReference type="GO" id="GO:0070372">
    <property type="term" value="P:regulation of ERK1 and ERK2 cascade"/>
    <property type="evidence" value="ECO:0000250"/>
    <property type="project" value="UniProtKB"/>
</dbReference>
<dbReference type="GO" id="GO:0050730">
    <property type="term" value="P:regulation of peptidyl-tyrosine phosphorylation"/>
    <property type="evidence" value="ECO:0000250"/>
    <property type="project" value="UniProtKB"/>
</dbReference>
<dbReference type="GO" id="GO:0031952">
    <property type="term" value="P:regulation of protein autophosphorylation"/>
    <property type="evidence" value="ECO:0000250"/>
    <property type="project" value="UniProtKB"/>
</dbReference>
<dbReference type="CDD" id="cd10485">
    <property type="entry name" value="EphR_LBD_A7"/>
    <property type="match status" value="1"/>
</dbReference>
<dbReference type="CDD" id="cd00063">
    <property type="entry name" value="FN3"/>
    <property type="match status" value="2"/>
</dbReference>
<dbReference type="CDD" id="cd05066">
    <property type="entry name" value="PTKc_EphR_A"/>
    <property type="match status" value="1"/>
</dbReference>
<dbReference type="CDD" id="cd09548">
    <property type="entry name" value="SAM_EPH-A7"/>
    <property type="match status" value="1"/>
</dbReference>
<dbReference type="FunFam" id="1.10.150.50:FF:000001">
    <property type="entry name" value="Ephrin type-A receptor 5"/>
    <property type="match status" value="1"/>
</dbReference>
<dbReference type="FunFam" id="2.10.50.10:FF:000001">
    <property type="entry name" value="Ephrin type-A receptor 5"/>
    <property type="match status" value="1"/>
</dbReference>
<dbReference type="FunFam" id="2.60.40.10:FF:000045">
    <property type="entry name" value="Ephrin type-A receptor 5"/>
    <property type="match status" value="1"/>
</dbReference>
<dbReference type="FunFam" id="2.60.40.1770:FF:000001">
    <property type="entry name" value="Ephrin type-A receptor 5"/>
    <property type="match status" value="1"/>
</dbReference>
<dbReference type="FunFam" id="3.30.200.20:FF:000001">
    <property type="entry name" value="Ephrin type-A receptor 5"/>
    <property type="match status" value="1"/>
</dbReference>
<dbReference type="FunFam" id="1.10.510.10:FF:000130">
    <property type="entry name" value="Ephrin type-A receptor 7"/>
    <property type="match status" value="1"/>
</dbReference>
<dbReference type="FunFam" id="2.60.120.260:FF:000001">
    <property type="entry name" value="Ephrin type-A receptor 7"/>
    <property type="match status" value="1"/>
</dbReference>
<dbReference type="FunFam" id="2.60.40.10:FF:000190">
    <property type="entry name" value="Ephrin type-A receptor 7"/>
    <property type="match status" value="1"/>
</dbReference>
<dbReference type="Gene3D" id="2.60.40.1770">
    <property type="entry name" value="ephrin a2 ectodomain"/>
    <property type="match status" value="1"/>
</dbReference>
<dbReference type="Gene3D" id="2.60.120.260">
    <property type="entry name" value="Galactose-binding domain-like"/>
    <property type="match status" value="1"/>
</dbReference>
<dbReference type="Gene3D" id="2.60.40.10">
    <property type="entry name" value="Immunoglobulins"/>
    <property type="match status" value="2"/>
</dbReference>
<dbReference type="Gene3D" id="3.30.200.20">
    <property type="entry name" value="Phosphorylase Kinase, domain 1"/>
    <property type="match status" value="1"/>
</dbReference>
<dbReference type="Gene3D" id="1.10.150.50">
    <property type="entry name" value="Transcription Factor, Ets-1"/>
    <property type="match status" value="1"/>
</dbReference>
<dbReference type="Gene3D" id="1.10.510.10">
    <property type="entry name" value="Transferase(Phosphotransferase) domain 1"/>
    <property type="match status" value="1"/>
</dbReference>
<dbReference type="Gene3D" id="2.10.50.10">
    <property type="entry name" value="Tumor Necrosis Factor Receptor, subunit A, domain 2"/>
    <property type="match status" value="1"/>
</dbReference>
<dbReference type="InterPro" id="IPR027936">
    <property type="entry name" value="Eph_TM"/>
</dbReference>
<dbReference type="InterPro" id="IPR034283">
    <property type="entry name" value="EphA7_rcpt_lig-bd"/>
</dbReference>
<dbReference type="InterPro" id="IPR001090">
    <property type="entry name" value="Ephrin_rcpt_lig-bd_dom"/>
</dbReference>
<dbReference type="InterPro" id="IPR050449">
    <property type="entry name" value="Ephrin_rcpt_TKs"/>
</dbReference>
<dbReference type="InterPro" id="IPR003961">
    <property type="entry name" value="FN3_dom"/>
</dbReference>
<dbReference type="InterPro" id="IPR036116">
    <property type="entry name" value="FN3_sf"/>
</dbReference>
<dbReference type="InterPro" id="IPR008979">
    <property type="entry name" value="Galactose-bd-like_sf"/>
</dbReference>
<dbReference type="InterPro" id="IPR013783">
    <property type="entry name" value="Ig-like_fold"/>
</dbReference>
<dbReference type="InterPro" id="IPR011009">
    <property type="entry name" value="Kinase-like_dom_sf"/>
</dbReference>
<dbReference type="InterPro" id="IPR000719">
    <property type="entry name" value="Prot_kinase_dom"/>
</dbReference>
<dbReference type="InterPro" id="IPR017441">
    <property type="entry name" value="Protein_kinase_ATP_BS"/>
</dbReference>
<dbReference type="InterPro" id="IPR001660">
    <property type="entry name" value="SAM"/>
</dbReference>
<dbReference type="InterPro" id="IPR013761">
    <property type="entry name" value="SAM/pointed_sf"/>
</dbReference>
<dbReference type="InterPro" id="IPR001245">
    <property type="entry name" value="Ser-Thr/Tyr_kinase_cat_dom"/>
</dbReference>
<dbReference type="InterPro" id="IPR011641">
    <property type="entry name" value="Tyr-kin_ephrin_A/B_rcpt-like"/>
</dbReference>
<dbReference type="InterPro" id="IPR008266">
    <property type="entry name" value="Tyr_kinase_AS"/>
</dbReference>
<dbReference type="InterPro" id="IPR020635">
    <property type="entry name" value="Tyr_kinase_cat_dom"/>
</dbReference>
<dbReference type="InterPro" id="IPR016257">
    <property type="entry name" value="Tyr_kinase_ephrin_rcpt"/>
</dbReference>
<dbReference type="InterPro" id="IPR001426">
    <property type="entry name" value="Tyr_kinase_rcpt_V_CS"/>
</dbReference>
<dbReference type="PANTHER" id="PTHR46877">
    <property type="entry name" value="EPH RECEPTOR A5"/>
    <property type="match status" value="1"/>
</dbReference>
<dbReference type="PANTHER" id="PTHR46877:SF9">
    <property type="entry name" value="EPHRIN TYPE-A RECEPTOR 7"/>
    <property type="match status" value="1"/>
</dbReference>
<dbReference type="Pfam" id="PF14575">
    <property type="entry name" value="EphA2_TM"/>
    <property type="match status" value="1"/>
</dbReference>
<dbReference type="Pfam" id="PF01404">
    <property type="entry name" value="Ephrin_lbd"/>
    <property type="match status" value="1"/>
</dbReference>
<dbReference type="Pfam" id="PF07699">
    <property type="entry name" value="Ephrin_rec_like"/>
    <property type="match status" value="1"/>
</dbReference>
<dbReference type="Pfam" id="PF00041">
    <property type="entry name" value="fn3"/>
    <property type="match status" value="2"/>
</dbReference>
<dbReference type="Pfam" id="PF07714">
    <property type="entry name" value="PK_Tyr_Ser-Thr"/>
    <property type="match status" value="1"/>
</dbReference>
<dbReference type="Pfam" id="PF00536">
    <property type="entry name" value="SAM_1"/>
    <property type="match status" value="1"/>
</dbReference>
<dbReference type="PIRSF" id="PIRSF000666">
    <property type="entry name" value="TyrPK_ephrin_receptor"/>
    <property type="match status" value="1"/>
</dbReference>
<dbReference type="PRINTS" id="PR00014">
    <property type="entry name" value="FNTYPEIII"/>
</dbReference>
<dbReference type="PRINTS" id="PR00109">
    <property type="entry name" value="TYRKINASE"/>
</dbReference>
<dbReference type="SMART" id="SM00615">
    <property type="entry name" value="EPH_lbd"/>
    <property type="match status" value="1"/>
</dbReference>
<dbReference type="SMART" id="SM01411">
    <property type="entry name" value="Ephrin_rec_like"/>
    <property type="match status" value="1"/>
</dbReference>
<dbReference type="SMART" id="SM00060">
    <property type="entry name" value="FN3"/>
    <property type="match status" value="2"/>
</dbReference>
<dbReference type="SMART" id="SM00454">
    <property type="entry name" value="SAM"/>
    <property type="match status" value="1"/>
</dbReference>
<dbReference type="SMART" id="SM00219">
    <property type="entry name" value="TyrKc"/>
    <property type="match status" value="1"/>
</dbReference>
<dbReference type="SUPFAM" id="SSF49265">
    <property type="entry name" value="Fibronectin type III"/>
    <property type="match status" value="1"/>
</dbReference>
<dbReference type="SUPFAM" id="SSF49785">
    <property type="entry name" value="Galactose-binding domain-like"/>
    <property type="match status" value="1"/>
</dbReference>
<dbReference type="SUPFAM" id="SSF56112">
    <property type="entry name" value="Protein kinase-like (PK-like)"/>
    <property type="match status" value="1"/>
</dbReference>
<dbReference type="SUPFAM" id="SSF47769">
    <property type="entry name" value="SAM/Pointed domain"/>
    <property type="match status" value="1"/>
</dbReference>
<dbReference type="PROSITE" id="PS01186">
    <property type="entry name" value="EGF_2"/>
    <property type="match status" value="1"/>
</dbReference>
<dbReference type="PROSITE" id="PS51550">
    <property type="entry name" value="EPH_LBD"/>
    <property type="match status" value="1"/>
</dbReference>
<dbReference type="PROSITE" id="PS50853">
    <property type="entry name" value="FN3"/>
    <property type="match status" value="2"/>
</dbReference>
<dbReference type="PROSITE" id="PS00107">
    <property type="entry name" value="PROTEIN_KINASE_ATP"/>
    <property type="match status" value="1"/>
</dbReference>
<dbReference type="PROSITE" id="PS50011">
    <property type="entry name" value="PROTEIN_KINASE_DOM"/>
    <property type="match status" value="1"/>
</dbReference>
<dbReference type="PROSITE" id="PS00109">
    <property type="entry name" value="PROTEIN_KINASE_TYR"/>
    <property type="match status" value="1"/>
</dbReference>
<dbReference type="PROSITE" id="PS00790">
    <property type="entry name" value="RECEPTOR_TYR_KIN_V_1"/>
    <property type="match status" value="1"/>
</dbReference>
<dbReference type="PROSITE" id="PS00791">
    <property type="entry name" value="RECEPTOR_TYR_KIN_V_2"/>
    <property type="match status" value="1"/>
</dbReference>
<dbReference type="PROSITE" id="PS50105">
    <property type="entry name" value="SAM_DOMAIN"/>
    <property type="match status" value="1"/>
</dbReference>
<gene>
    <name type="primary">EPHA7</name>
    <name type="synonym">CEK11</name>
</gene>
<reference key="1">
    <citation type="journal article" date="1997" name="Mech. Dev.">
        <title>The expression of chick EphA7 during segmentation of the central and peripheral nervous system.</title>
        <authorList>
            <person name="Araujo M."/>
            <person name="Nieto M.A."/>
        </authorList>
    </citation>
    <scope>NUCLEOTIDE SEQUENCE [MRNA]</scope>
    <scope>DEVELOPMENTAL STAGE</scope>
    <source>
        <tissue>Embryo</tissue>
    </source>
</reference>
<feature type="signal peptide" evidence="2">
    <location>
        <begin position="1"/>
        <end position="27"/>
    </location>
</feature>
<feature type="chain" id="PRO_0000016821" description="Ephrin type-A receptor 7">
    <location>
        <begin position="28"/>
        <end position="993"/>
    </location>
</feature>
<feature type="topological domain" description="Extracellular" evidence="2">
    <location>
        <begin position="28"/>
        <end position="550"/>
    </location>
</feature>
<feature type="transmembrane region" description="Helical" evidence="2">
    <location>
        <begin position="551"/>
        <end position="571"/>
    </location>
</feature>
<feature type="topological domain" description="Cytoplasmic" evidence="2">
    <location>
        <begin position="572"/>
        <end position="993"/>
    </location>
</feature>
<feature type="domain" description="Eph LBD" evidence="6">
    <location>
        <begin position="32"/>
        <end position="210"/>
    </location>
</feature>
<feature type="domain" description="Fibronectin type-III 1" evidence="5">
    <location>
        <begin position="331"/>
        <end position="441"/>
    </location>
</feature>
<feature type="domain" description="Fibronectin type-III 2" evidence="5">
    <location>
        <begin position="442"/>
        <end position="537"/>
    </location>
</feature>
<feature type="domain" description="Protein kinase" evidence="3">
    <location>
        <begin position="628"/>
        <end position="889"/>
    </location>
</feature>
<feature type="domain" description="SAM" evidence="4">
    <location>
        <begin position="918"/>
        <end position="982"/>
    </location>
</feature>
<feature type="short sequence motif" description="PDZ-binding" evidence="2">
    <location>
        <begin position="991"/>
        <end position="993"/>
    </location>
</feature>
<feature type="active site" description="Proton acceptor" evidence="3 7">
    <location>
        <position position="753"/>
    </location>
</feature>
<feature type="binding site" evidence="3">
    <location>
        <begin position="634"/>
        <end position="642"/>
    </location>
    <ligand>
        <name>ATP</name>
        <dbReference type="ChEBI" id="CHEBI:30616"/>
    </ligand>
</feature>
<feature type="binding site" evidence="3">
    <location>
        <position position="660"/>
    </location>
    <ligand>
        <name>ATP</name>
        <dbReference type="ChEBI" id="CHEBI:30616"/>
    </ligand>
</feature>
<feature type="modified residue" description="Phosphotyrosine; by autocatalysis" evidence="2">
    <location>
        <position position="603"/>
    </location>
</feature>
<feature type="modified residue" description="Phosphotyrosine; by autocatalysis" evidence="2">
    <location>
        <position position="609"/>
    </location>
</feature>
<feature type="modified residue" description="Phosphotyrosine; by autocatalysis" evidence="2">
    <location>
        <position position="786"/>
    </location>
</feature>
<feature type="modified residue" description="Phosphotyrosine; by autocatalysis" evidence="2">
    <location>
        <position position="935"/>
    </location>
</feature>
<feature type="glycosylation site" description="N-linked (GlcNAc...) asparagine" evidence="2">
    <location>
        <position position="343"/>
    </location>
</feature>
<feature type="glycosylation site" description="N-linked (GlcNAc...) asparagine" evidence="2">
    <location>
        <position position="410"/>
    </location>
</feature>
<evidence type="ECO:0000250" key="1"/>
<evidence type="ECO:0000255" key="2"/>
<evidence type="ECO:0000255" key="3">
    <source>
        <dbReference type="PROSITE-ProRule" id="PRU00159"/>
    </source>
</evidence>
<evidence type="ECO:0000255" key="4">
    <source>
        <dbReference type="PROSITE-ProRule" id="PRU00184"/>
    </source>
</evidence>
<evidence type="ECO:0000255" key="5">
    <source>
        <dbReference type="PROSITE-ProRule" id="PRU00316"/>
    </source>
</evidence>
<evidence type="ECO:0000255" key="6">
    <source>
        <dbReference type="PROSITE-ProRule" id="PRU00883"/>
    </source>
</evidence>
<evidence type="ECO:0000255" key="7">
    <source>
        <dbReference type="PROSITE-ProRule" id="PRU10028"/>
    </source>
</evidence>
<evidence type="ECO:0000269" key="8">
    <source>
    </source>
</evidence>
<organism>
    <name type="scientific">Gallus gallus</name>
    <name type="common">Chicken</name>
    <dbReference type="NCBI Taxonomy" id="9031"/>
    <lineage>
        <taxon>Eukaryota</taxon>
        <taxon>Metazoa</taxon>
        <taxon>Chordata</taxon>
        <taxon>Craniata</taxon>
        <taxon>Vertebrata</taxon>
        <taxon>Euteleostomi</taxon>
        <taxon>Archelosauria</taxon>
        <taxon>Archosauria</taxon>
        <taxon>Dinosauria</taxon>
        <taxon>Saurischia</taxon>
        <taxon>Theropoda</taxon>
        <taxon>Coelurosauria</taxon>
        <taxon>Aves</taxon>
        <taxon>Neognathae</taxon>
        <taxon>Galloanserae</taxon>
        <taxon>Galliformes</taxon>
        <taxon>Phasianidae</taxon>
        <taxon>Phasianinae</taxon>
        <taxon>Gallus</taxon>
    </lineage>
</organism>
<proteinExistence type="evidence at transcript level"/>
<keyword id="KW-0053">Apoptosis</keyword>
<keyword id="KW-0067">ATP-binding</keyword>
<keyword id="KW-1003">Cell membrane</keyword>
<keyword id="KW-0217">Developmental protein</keyword>
<keyword id="KW-0325">Glycoprotein</keyword>
<keyword id="KW-0418">Kinase</keyword>
<keyword id="KW-0472">Membrane</keyword>
<keyword id="KW-0524">Neurogenesis</keyword>
<keyword id="KW-0547">Nucleotide-binding</keyword>
<keyword id="KW-0597">Phosphoprotein</keyword>
<keyword id="KW-0675">Receptor</keyword>
<keyword id="KW-1185">Reference proteome</keyword>
<keyword id="KW-0677">Repeat</keyword>
<keyword id="KW-0732">Signal</keyword>
<keyword id="KW-0808">Transferase</keyword>
<keyword id="KW-0812">Transmembrane</keyword>
<keyword id="KW-1133">Transmembrane helix</keyword>
<keyword id="KW-0829">Tyrosine-protein kinase</keyword>